<evidence type="ECO:0000255" key="1">
    <source>
        <dbReference type="HAMAP-Rule" id="MF_00530"/>
    </source>
</evidence>
<gene>
    <name evidence="1" type="primary">atpC</name>
    <name type="ordered locus">SFV_3757</name>
</gene>
<sequence>MAMTYHLDVVSAEQQMFSGLVEKIQVTGSEGELGIYPGHAPLLTAIKPGMIRIVKQHGHEEFIYLSGGILEVQPGNVTVLADTAIRGQDLDEARAMEAKRKAEEHISSSHGDVDYAQASAELAKAIAQLRVIELTKKAM</sequence>
<dbReference type="EMBL" id="CP000266">
    <property type="protein sequence ID" value="ABF05770.1"/>
    <property type="molecule type" value="Genomic_DNA"/>
</dbReference>
<dbReference type="RefSeq" id="WP_001251965.1">
    <property type="nucleotide sequence ID" value="NC_008258.1"/>
</dbReference>
<dbReference type="SMR" id="Q0SYU5"/>
<dbReference type="KEGG" id="sfv:SFV_3757"/>
<dbReference type="HOGENOM" id="CLU_084338_2_0_6"/>
<dbReference type="Proteomes" id="UP000000659">
    <property type="component" value="Chromosome"/>
</dbReference>
<dbReference type="GO" id="GO:0005886">
    <property type="term" value="C:plasma membrane"/>
    <property type="evidence" value="ECO:0007669"/>
    <property type="project" value="UniProtKB-SubCell"/>
</dbReference>
<dbReference type="GO" id="GO:0045259">
    <property type="term" value="C:proton-transporting ATP synthase complex"/>
    <property type="evidence" value="ECO:0007669"/>
    <property type="project" value="UniProtKB-KW"/>
</dbReference>
<dbReference type="GO" id="GO:0005524">
    <property type="term" value="F:ATP binding"/>
    <property type="evidence" value="ECO:0007669"/>
    <property type="project" value="UniProtKB-UniRule"/>
</dbReference>
<dbReference type="GO" id="GO:0046933">
    <property type="term" value="F:proton-transporting ATP synthase activity, rotational mechanism"/>
    <property type="evidence" value="ECO:0007669"/>
    <property type="project" value="UniProtKB-UniRule"/>
</dbReference>
<dbReference type="CDD" id="cd12152">
    <property type="entry name" value="F1-ATPase_delta"/>
    <property type="match status" value="1"/>
</dbReference>
<dbReference type="FunFam" id="1.20.5.440:FF:000001">
    <property type="entry name" value="ATP synthase epsilon chain"/>
    <property type="match status" value="1"/>
</dbReference>
<dbReference type="FunFam" id="2.60.15.10:FF:000001">
    <property type="entry name" value="ATP synthase epsilon chain"/>
    <property type="match status" value="1"/>
</dbReference>
<dbReference type="Gene3D" id="1.20.5.440">
    <property type="entry name" value="ATP synthase delta/epsilon subunit, C-terminal domain"/>
    <property type="match status" value="1"/>
</dbReference>
<dbReference type="Gene3D" id="2.60.15.10">
    <property type="entry name" value="F0F1 ATP synthase delta/epsilon subunit, N-terminal"/>
    <property type="match status" value="1"/>
</dbReference>
<dbReference type="HAMAP" id="MF_00530">
    <property type="entry name" value="ATP_synth_epsil_bac"/>
    <property type="match status" value="1"/>
</dbReference>
<dbReference type="InterPro" id="IPR036794">
    <property type="entry name" value="ATP_F1_dsu/esu_C_sf"/>
</dbReference>
<dbReference type="InterPro" id="IPR001469">
    <property type="entry name" value="ATP_synth_F1_dsu/esu"/>
</dbReference>
<dbReference type="InterPro" id="IPR020546">
    <property type="entry name" value="ATP_synth_F1_dsu/esu_N"/>
</dbReference>
<dbReference type="InterPro" id="IPR020547">
    <property type="entry name" value="ATP_synth_F1_esu_C"/>
</dbReference>
<dbReference type="InterPro" id="IPR036771">
    <property type="entry name" value="ATPsynth_dsu/esu_N"/>
</dbReference>
<dbReference type="NCBIfam" id="TIGR01216">
    <property type="entry name" value="ATP_synt_epsi"/>
    <property type="match status" value="1"/>
</dbReference>
<dbReference type="NCBIfam" id="NF001847">
    <property type="entry name" value="PRK00571.1-4"/>
    <property type="match status" value="1"/>
</dbReference>
<dbReference type="PANTHER" id="PTHR13822">
    <property type="entry name" value="ATP SYNTHASE DELTA/EPSILON CHAIN"/>
    <property type="match status" value="1"/>
</dbReference>
<dbReference type="PANTHER" id="PTHR13822:SF10">
    <property type="entry name" value="ATP SYNTHASE EPSILON CHAIN, CHLOROPLASTIC"/>
    <property type="match status" value="1"/>
</dbReference>
<dbReference type="Pfam" id="PF00401">
    <property type="entry name" value="ATP-synt_DE"/>
    <property type="match status" value="1"/>
</dbReference>
<dbReference type="Pfam" id="PF02823">
    <property type="entry name" value="ATP-synt_DE_N"/>
    <property type="match status" value="1"/>
</dbReference>
<dbReference type="SUPFAM" id="SSF46604">
    <property type="entry name" value="Epsilon subunit of F1F0-ATP synthase C-terminal domain"/>
    <property type="match status" value="1"/>
</dbReference>
<dbReference type="SUPFAM" id="SSF51344">
    <property type="entry name" value="Epsilon subunit of F1F0-ATP synthase N-terminal domain"/>
    <property type="match status" value="1"/>
</dbReference>
<name>ATPE_SHIF8</name>
<keyword id="KW-0066">ATP synthesis</keyword>
<keyword id="KW-0997">Cell inner membrane</keyword>
<keyword id="KW-1003">Cell membrane</keyword>
<keyword id="KW-0139">CF(1)</keyword>
<keyword id="KW-0375">Hydrogen ion transport</keyword>
<keyword id="KW-0406">Ion transport</keyword>
<keyword id="KW-0472">Membrane</keyword>
<keyword id="KW-0813">Transport</keyword>
<reference key="1">
    <citation type="journal article" date="2006" name="BMC Genomics">
        <title>Complete genome sequence of Shigella flexneri 5b and comparison with Shigella flexneri 2a.</title>
        <authorList>
            <person name="Nie H."/>
            <person name="Yang F."/>
            <person name="Zhang X."/>
            <person name="Yang J."/>
            <person name="Chen L."/>
            <person name="Wang J."/>
            <person name="Xiong Z."/>
            <person name="Peng J."/>
            <person name="Sun L."/>
            <person name="Dong J."/>
            <person name="Xue Y."/>
            <person name="Xu X."/>
            <person name="Chen S."/>
            <person name="Yao Z."/>
            <person name="Shen Y."/>
            <person name="Jin Q."/>
        </authorList>
    </citation>
    <scope>NUCLEOTIDE SEQUENCE [LARGE SCALE GENOMIC DNA]</scope>
    <source>
        <strain>8401</strain>
    </source>
</reference>
<comment type="function">
    <text evidence="1">Produces ATP from ADP in the presence of a proton gradient across the membrane.</text>
</comment>
<comment type="subunit">
    <text evidence="1">F-type ATPases have 2 components, CF(1) - the catalytic core - and CF(0) - the membrane proton channel. CF(1) has five subunits: alpha(3), beta(3), gamma(1), delta(1), epsilon(1). CF(0) has three main subunits: a, b and c.</text>
</comment>
<comment type="subcellular location">
    <subcellularLocation>
        <location evidence="1">Cell inner membrane</location>
        <topology evidence="1">Peripheral membrane protein</topology>
    </subcellularLocation>
</comment>
<comment type="similarity">
    <text evidence="1">Belongs to the ATPase epsilon chain family.</text>
</comment>
<protein>
    <recommendedName>
        <fullName evidence="1">ATP synthase epsilon chain</fullName>
    </recommendedName>
    <alternativeName>
        <fullName evidence="1">ATP synthase F1 sector epsilon subunit</fullName>
    </alternativeName>
    <alternativeName>
        <fullName evidence="1">F-ATPase epsilon subunit</fullName>
    </alternativeName>
</protein>
<proteinExistence type="inferred from homology"/>
<feature type="chain" id="PRO_1000056536" description="ATP synthase epsilon chain">
    <location>
        <begin position="1"/>
        <end position="139"/>
    </location>
</feature>
<organism>
    <name type="scientific">Shigella flexneri serotype 5b (strain 8401)</name>
    <dbReference type="NCBI Taxonomy" id="373384"/>
    <lineage>
        <taxon>Bacteria</taxon>
        <taxon>Pseudomonadati</taxon>
        <taxon>Pseudomonadota</taxon>
        <taxon>Gammaproteobacteria</taxon>
        <taxon>Enterobacterales</taxon>
        <taxon>Enterobacteriaceae</taxon>
        <taxon>Shigella</taxon>
    </lineage>
</organism>
<accession>Q0SYU5</accession>